<name>HLDD_BURP6</name>
<accession>A3NC24</accession>
<gene>
    <name evidence="1" type="primary">hldD</name>
    <name type="ordered locus">BURPS668_2876</name>
</gene>
<feature type="chain" id="PRO_1000069349" description="ADP-L-glycero-D-manno-heptose-6-epimerase">
    <location>
        <begin position="1"/>
        <end position="330"/>
    </location>
</feature>
<feature type="active site" description="Proton acceptor" evidence="1">
    <location>
        <position position="139"/>
    </location>
</feature>
<feature type="active site" description="Proton acceptor" evidence="1">
    <location>
        <position position="177"/>
    </location>
</feature>
<feature type="binding site" evidence="1">
    <location>
        <begin position="11"/>
        <end position="12"/>
    </location>
    <ligand>
        <name>NADP(+)</name>
        <dbReference type="ChEBI" id="CHEBI:58349"/>
    </ligand>
</feature>
<feature type="binding site" evidence="1">
    <location>
        <begin position="32"/>
        <end position="33"/>
    </location>
    <ligand>
        <name>NADP(+)</name>
        <dbReference type="ChEBI" id="CHEBI:58349"/>
    </ligand>
</feature>
<feature type="binding site" evidence="1">
    <location>
        <position position="39"/>
    </location>
    <ligand>
        <name>NADP(+)</name>
        <dbReference type="ChEBI" id="CHEBI:58349"/>
    </ligand>
</feature>
<feature type="binding site" evidence="1">
    <location>
        <position position="54"/>
    </location>
    <ligand>
        <name>NADP(+)</name>
        <dbReference type="ChEBI" id="CHEBI:58349"/>
    </ligand>
</feature>
<feature type="binding site" evidence="1">
    <location>
        <begin position="75"/>
        <end position="79"/>
    </location>
    <ligand>
        <name>NADP(+)</name>
        <dbReference type="ChEBI" id="CHEBI:58349"/>
    </ligand>
</feature>
<feature type="binding site" evidence="1">
    <location>
        <position position="92"/>
    </location>
    <ligand>
        <name>NADP(+)</name>
        <dbReference type="ChEBI" id="CHEBI:58349"/>
    </ligand>
</feature>
<feature type="binding site" evidence="1">
    <location>
        <position position="143"/>
    </location>
    <ligand>
        <name>NADP(+)</name>
        <dbReference type="ChEBI" id="CHEBI:58349"/>
    </ligand>
</feature>
<feature type="binding site" evidence="1">
    <location>
        <position position="168"/>
    </location>
    <ligand>
        <name>substrate</name>
    </ligand>
</feature>
<feature type="binding site" evidence="1">
    <location>
        <position position="169"/>
    </location>
    <ligand>
        <name>NADP(+)</name>
        <dbReference type="ChEBI" id="CHEBI:58349"/>
    </ligand>
</feature>
<feature type="binding site" evidence="1">
    <location>
        <position position="177"/>
    </location>
    <ligand>
        <name>NADP(+)</name>
        <dbReference type="ChEBI" id="CHEBI:58349"/>
    </ligand>
</feature>
<feature type="binding site" evidence="1">
    <location>
        <position position="179"/>
    </location>
    <ligand>
        <name>substrate</name>
    </ligand>
</feature>
<feature type="binding site" evidence="1">
    <location>
        <position position="186"/>
    </location>
    <ligand>
        <name>substrate</name>
    </ligand>
</feature>
<feature type="binding site" evidence="1">
    <location>
        <begin position="200"/>
        <end position="203"/>
    </location>
    <ligand>
        <name>substrate</name>
    </ligand>
</feature>
<feature type="binding site" evidence="1">
    <location>
        <position position="213"/>
    </location>
    <ligand>
        <name>substrate</name>
    </ligand>
</feature>
<feature type="binding site" evidence="1">
    <location>
        <position position="292"/>
    </location>
    <ligand>
        <name>substrate</name>
    </ligand>
</feature>
<protein>
    <recommendedName>
        <fullName evidence="1">ADP-L-glycero-D-manno-heptose-6-epimerase</fullName>
        <ecNumber evidence="1">5.1.3.20</ecNumber>
    </recommendedName>
    <alternativeName>
        <fullName evidence="1">ADP-L-glycero-beta-D-manno-heptose-6-epimerase</fullName>
        <shortName evidence="1">ADP-glyceromanno-heptose 6-epimerase</shortName>
        <shortName evidence="1">ADP-hep 6-epimerase</shortName>
        <shortName evidence="1">AGME</shortName>
    </alternativeName>
</protein>
<organism>
    <name type="scientific">Burkholderia pseudomallei (strain 668)</name>
    <dbReference type="NCBI Taxonomy" id="320373"/>
    <lineage>
        <taxon>Bacteria</taxon>
        <taxon>Pseudomonadati</taxon>
        <taxon>Pseudomonadota</taxon>
        <taxon>Betaproteobacteria</taxon>
        <taxon>Burkholderiales</taxon>
        <taxon>Burkholderiaceae</taxon>
        <taxon>Burkholderia</taxon>
        <taxon>pseudomallei group</taxon>
    </lineage>
</organism>
<keyword id="KW-0119">Carbohydrate metabolism</keyword>
<keyword id="KW-0413">Isomerase</keyword>
<keyword id="KW-0521">NADP</keyword>
<evidence type="ECO:0000255" key="1">
    <source>
        <dbReference type="HAMAP-Rule" id="MF_01601"/>
    </source>
</evidence>
<reference key="1">
    <citation type="journal article" date="2010" name="Genome Biol. Evol.">
        <title>Continuing evolution of Burkholderia mallei through genome reduction and large-scale rearrangements.</title>
        <authorList>
            <person name="Losada L."/>
            <person name="Ronning C.M."/>
            <person name="DeShazer D."/>
            <person name="Woods D."/>
            <person name="Fedorova N."/>
            <person name="Kim H.S."/>
            <person name="Shabalina S.A."/>
            <person name="Pearson T.R."/>
            <person name="Brinkac L."/>
            <person name="Tan P."/>
            <person name="Nandi T."/>
            <person name="Crabtree J."/>
            <person name="Badger J."/>
            <person name="Beckstrom-Sternberg S."/>
            <person name="Saqib M."/>
            <person name="Schutzer S.E."/>
            <person name="Keim P."/>
            <person name="Nierman W.C."/>
        </authorList>
    </citation>
    <scope>NUCLEOTIDE SEQUENCE [LARGE SCALE GENOMIC DNA]</scope>
    <source>
        <strain>668</strain>
    </source>
</reference>
<comment type="function">
    <text evidence="1">Catalyzes the interconversion between ADP-D-glycero-beta-D-manno-heptose and ADP-L-glycero-beta-D-manno-heptose via an epimerization at carbon 6 of the heptose.</text>
</comment>
<comment type="catalytic activity">
    <reaction evidence="1">
        <text>ADP-D-glycero-beta-D-manno-heptose = ADP-L-glycero-beta-D-manno-heptose</text>
        <dbReference type="Rhea" id="RHEA:17577"/>
        <dbReference type="ChEBI" id="CHEBI:59967"/>
        <dbReference type="ChEBI" id="CHEBI:61506"/>
        <dbReference type="EC" id="5.1.3.20"/>
    </reaction>
</comment>
<comment type="cofactor">
    <cofactor evidence="1">
        <name>NADP(+)</name>
        <dbReference type="ChEBI" id="CHEBI:58349"/>
    </cofactor>
    <text evidence="1">Binds 1 NADP(+) per subunit.</text>
</comment>
<comment type="pathway">
    <text evidence="1">Nucleotide-sugar biosynthesis; ADP-L-glycero-beta-D-manno-heptose biosynthesis; ADP-L-glycero-beta-D-manno-heptose from D-glycero-beta-D-manno-heptose 7-phosphate: step 4/4.</text>
</comment>
<comment type="subunit">
    <text evidence="1">Homopentamer.</text>
</comment>
<comment type="domain">
    <text evidence="1">Contains a large N-terminal NADP-binding domain, and a smaller C-terminal substrate-binding domain.</text>
</comment>
<comment type="similarity">
    <text evidence="1">Belongs to the NAD(P)-dependent epimerase/dehydratase family. HldD subfamily.</text>
</comment>
<proteinExistence type="inferred from homology"/>
<dbReference type="EC" id="5.1.3.20" evidence="1"/>
<dbReference type="EMBL" id="CP000570">
    <property type="protein sequence ID" value="ABN81549.1"/>
    <property type="molecule type" value="Genomic_DNA"/>
</dbReference>
<dbReference type="SMR" id="A3NC24"/>
<dbReference type="KEGG" id="bpd:BURPS668_2876"/>
<dbReference type="HOGENOM" id="CLU_007383_1_3_4"/>
<dbReference type="UniPathway" id="UPA00356">
    <property type="reaction ID" value="UER00440"/>
</dbReference>
<dbReference type="GO" id="GO:0008712">
    <property type="term" value="F:ADP-glyceromanno-heptose 6-epimerase activity"/>
    <property type="evidence" value="ECO:0007669"/>
    <property type="project" value="UniProtKB-UniRule"/>
</dbReference>
<dbReference type="GO" id="GO:0050661">
    <property type="term" value="F:NADP binding"/>
    <property type="evidence" value="ECO:0007669"/>
    <property type="project" value="InterPro"/>
</dbReference>
<dbReference type="GO" id="GO:0097171">
    <property type="term" value="P:ADP-L-glycero-beta-D-manno-heptose biosynthetic process"/>
    <property type="evidence" value="ECO:0007669"/>
    <property type="project" value="UniProtKB-UniPathway"/>
</dbReference>
<dbReference type="GO" id="GO:0005975">
    <property type="term" value="P:carbohydrate metabolic process"/>
    <property type="evidence" value="ECO:0007669"/>
    <property type="project" value="UniProtKB-UniRule"/>
</dbReference>
<dbReference type="CDD" id="cd05248">
    <property type="entry name" value="ADP_GME_SDR_e"/>
    <property type="match status" value="1"/>
</dbReference>
<dbReference type="Gene3D" id="3.40.50.720">
    <property type="entry name" value="NAD(P)-binding Rossmann-like Domain"/>
    <property type="match status" value="1"/>
</dbReference>
<dbReference type="Gene3D" id="3.90.25.10">
    <property type="entry name" value="UDP-galactose 4-epimerase, domain 1"/>
    <property type="match status" value="1"/>
</dbReference>
<dbReference type="HAMAP" id="MF_01601">
    <property type="entry name" value="Heptose_epimerase"/>
    <property type="match status" value="1"/>
</dbReference>
<dbReference type="InterPro" id="IPR001509">
    <property type="entry name" value="Epimerase_deHydtase"/>
</dbReference>
<dbReference type="InterPro" id="IPR011912">
    <property type="entry name" value="Heptose_epim"/>
</dbReference>
<dbReference type="InterPro" id="IPR036291">
    <property type="entry name" value="NAD(P)-bd_dom_sf"/>
</dbReference>
<dbReference type="NCBIfam" id="TIGR02197">
    <property type="entry name" value="heptose_epim"/>
    <property type="match status" value="1"/>
</dbReference>
<dbReference type="PANTHER" id="PTHR43103:SF3">
    <property type="entry name" value="ADP-L-GLYCERO-D-MANNO-HEPTOSE-6-EPIMERASE"/>
    <property type="match status" value="1"/>
</dbReference>
<dbReference type="PANTHER" id="PTHR43103">
    <property type="entry name" value="NUCLEOSIDE-DIPHOSPHATE-SUGAR EPIMERASE"/>
    <property type="match status" value="1"/>
</dbReference>
<dbReference type="Pfam" id="PF01370">
    <property type="entry name" value="Epimerase"/>
    <property type="match status" value="1"/>
</dbReference>
<dbReference type="SUPFAM" id="SSF51735">
    <property type="entry name" value="NAD(P)-binding Rossmann-fold domains"/>
    <property type="match status" value="1"/>
</dbReference>
<sequence>MTLIVTGAAGFIGANIVKALNERGETRIIAVDNLTRADKFKNLVDCEIDDYLDKTEFVERFARGDFGKVRAVFHEGACSDTMETDGRYMMDNNFRYSRAVLDACLAQGTQFLYASSAAIYGGSSRFVEAREFEAPLNVYGYSKFLFDQVIRRVMPSAKSQIAGFRYFNVYGPRESHKGRMASVAFHNFNQFRAEGKVKLFGEYNGYGPGEQTRDFVSVEDVAKVNLHFFDHPQKSGIFNLGTGRAQPFNDIATTVVNTLRALEGQPALTLAEQVEQGLVEYVPFPDALRGKYQCFTQADQTKLRAAGYDAPFLTVQEGVDRYVRWLFGQL</sequence>